<reference key="1">
    <citation type="journal article" date="2006" name="Genome Res.">
        <title>Massive genome erosion and functional adaptations provide insights into the symbiotic lifestyle of Sodalis glossinidius in the tsetse host.</title>
        <authorList>
            <person name="Toh H."/>
            <person name="Weiss B.L."/>
            <person name="Perkin S.A.H."/>
            <person name="Yamashita A."/>
            <person name="Oshima K."/>
            <person name="Hattori M."/>
            <person name="Aksoy S."/>
        </authorList>
    </citation>
    <scope>NUCLEOTIDE SEQUENCE [LARGE SCALE GENOMIC DNA]</scope>
    <source>
        <strain>morsitans</strain>
    </source>
</reference>
<feature type="chain" id="PRO_0000241909" description="Orotidine 5'-phosphate decarboxylase">
    <location>
        <begin position="1"/>
        <end position="252"/>
    </location>
</feature>
<feature type="active site" description="Proton donor" evidence="1">
    <location>
        <position position="77"/>
    </location>
</feature>
<feature type="binding site" evidence="1">
    <location>
        <position position="26"/>
    </location>
    <ligand>
        <name>substrate</name>
    </ligand>
</feature>
<feature type="binding site" evidence="1">
    <location>
        <position position="48"/>
    </location>
    <ligand>
        <name>substrate</name>
    </ligand>
</feature>
<feature type="binding site" evidence="1">
    <location>
        <begin position="75"/>
        <end position="84"/>
    </location>
    <ligand>
        <name>substrate</name>
    </ligand>
</feature>
<feature type="binding site" evidence="1">
    <location>
        <position position="135"/>
    </location>
    <ligand>
        <name>substrate</name>
    </ligand>
</feature>
<feature type="binding site" evidence="1">
    <location>
        <position position="196"/>
    </location>
    <ligand>
        <name>substrate</name>
    </ligand>
</feature>
<feature type="binding site" evidence="1">
    <location>
        <position position="205"/>
    </location>
    <ligand>
        <name>substrate</name>
    </ligand>
</feature>
<feature type="binding site" evidence="1">
    <location>
        <position position="225"/>
    </location>
    <ligand>
        <name>substrate</name>
    </ligand>
</feature>
<feature type="binding site" evidence="1">
    <location>
        <position position="226"/>
    </location>
    <ligand>
        <name>substrate</name>
    </ligand>
</feature>
<protein>
    <recommendedName>
        <fullName evidence="1">Orotidine 5'-phosphate decarboxylase</fullName>
        <ecNumber evidence="1">4.1.1.23</ecNumber>
    </recommendedName>
    <alternativeName>
        <fullName evidence="1">OMP decarboxylase</fullName>
        <shortName evidence="1">OMPDCase</shortName>
        <shortName evidence="1">OMPdecase</shortName>
    </alternativeName>
</protein>
<organism>
    <name type="scientific">Sodalis glossinidius (strain morsitans)</name>
    <dbReference type="NCBI Taxonomy" id="343509"/>
    <lineage>
        <taxon>Bacteria</taxon>
        <taxon>Pseudomonadati</taxon>
        <taxon>Pseudomonadota</taxon>
        <taxon>Gammaproteobacteria</taxon>
        <taxon>Enterobacterales</taxon>
        <taxon>Bruguierivoracaceae</taxon>
        <taxon>Sodalis</taxon>
    </lineage>
</organism>
<dbReference type="EC" id="4.1.1.23" evidence="1"/>
<dbReference type="EMBL" id="AP008232">
    <property type="protein sequence ID" value="BAE74689.1"/>
    <property type="molecule type" value="Genomic_DNA"/>
</dbReference>
<dbReference type="RefSeq" id="WP_011411234.1">
    <property type="nucleotide sequence ID" value="NC_007712.1"/>
</dbReference>
<dbReference type="SMR" id="Q2NT36"/>
<dbReference type="STRING" id="343509.SG1414"/>
<dbReference type="KEGG" id="sgl:SG1414"/>
<dbReference type="eggNOG" id="COG0284">
    <property type="taxonomic scope" value="Bacteria"/>
</dbReference>
<dbReference type="HOGENOM" id="CLU_067069_0_0_6"/>
<dbReference type="OrthoDB" id="9806203at2"/>
<dbReference type="BioCyc" id="SGLO343509:SGP1_RS12405-MONOMER"/>
<dbReference type="UniPathway" id="UPA00070">
    <property type="reaction ID" value="UER00120"/>
</dbReference>
<dbReference type="Proteomes" id="UP000001932">
    <property type="component" value="Chromosome"/>
</dbReference>
<dbReference type="GO" id="GO:0005829">
    <property type="term" value="C:cytosol"/>
    <property type="evidence" value="ECO:0007669"/>
    <property type="project" value="TreeGrafter"/>
</dbReference>
<dbReference type="GO" id="GO:0004590">
    <property type="term" value="F:orotidine-5'-phosphate decarboxylase activity"/>
    <property type="evidence" value="ECO:0007669"/>
    <property type="project" value="UniProtKB-UniRule"/>
</dbReference>
<dbReference type="GO" id="GO:0006207">
    <property type="term" value="P:'de novo' pyrimidine nucleobase biosynthetic process"/>
    <property type="evidence" value="ECO:0007669"/>
    <property type="project" value="InterPro"/>
</dbReference>
<dbReference type="GO" id="GO:0044205">
    <property type="term" value="P:'de novo' UMP biosynthetic process"/>
    <property type="evidence" value="ECO:0007669"/>
    <property type="project" value="UniProtKB-UniRule"/>
</dbReference>
<dbReference type="CDD" id="cd04725">
    <property type="entry name" value="OMP_decarboxylase_like"/>
    <property type="match status" value="1"/>
</dbReference>
<dbReference type="FunFam" id="3.20.20.70:FF:000015">
    <property type="entry name" value="Orotidine 5'-phosphate decarboxylase"/>
    <property type="match status" value="1"/>
</dbReference>
<dbReference type="Gene3D" id="3.20.20.70">
    <property type="entry name" value="Aldolase class I"/>
    <property type="match status" value="1"/>
</dbReference>
<dbReference type="HAMAP" id="MF_01200_B">
    <property type="entry name" value="OMPdecase_type1_B"/>
    <property type="match status" value="1"/>
</dbReference>
<dbReference type="InterPro" id="IPR013785">
    <property type="entry name" value="Aldolase_TIM"/>
</dbReference>
<dbReference type="InterPro" id="IPR014732">
    <property type="entry name" value="OMPdecase"/>
</dbReference>
<dbReference type="InterPro" id="IPR018089">
    <property type="entry name" value="OMPdecase_AS"/>
</dbReference>
<dbReference type="InterPro" id="IPR047596">
    <property type="entry name" value="OMPdecase_bac"/>
</dbReference>
<dbReference type="InterPro" id="IPR001754">
    <property type="entry name" value="OMPdeCOase_dom"/>
</dbReference>
<dbReference type="InterPro" id="IPR011060">
    <property type="entry name" value="RibuloseP-bd_barrel"/>
</dbReference>
<dbReference type="NCBIfam" id="NF001273">
    <property type="entry name" value="PRK00230.1"/>
    <property type="match status" value="1"/>
</dbReference>
<dbReference type="NCBIfam" id="TIGR01740">
    <property type="entry name" value="pyrF"/>
    <property type="match status" value="1"/>
</dbReference>
<dbReference type="PANTHER" id="PTHR32119">
    <property type="entry name" value="OROTIDINE 5'-PHOSPHATE DECARBOXYLASE"/>
    <property type="match status" value="1"/>
</dbReference>
<dbReference type="PANTHER" id="PTHR32119:SF2">
    <property type="entry name" value="OROTIDINE 5'-PHOSPHATE DECARBOXYLASE"/>
    <property type="match status" value="1"/>
</dbReference>
<dbReference type="Pfam" id="PF00215">
    <property type="entry name" value="OMPdecase"/>
    <property type="match status" value="1"/>
</dbReference>
<dbReference type="SMART" id="SM00934">
    <property type="entry name" value="OMPdecase"/>
    <property type="match status" value="1"/>
</dbReference>
<dbReference type="SUPFAM" id="SSF51366">
    <property type="entry name" value="Ribulose-phoshate binding barrel"/>
    <property type="match status" value="1"/>
</dbReference>
<dbReference type="PROSITE" id="PS00156">
    <property type="entry name" value="OMPDECASE"/>
    <property type="match status" value="1"/>
</dbReference>
<sequence>MTRTILSSSSSLSPQQAGSPVIVALDYADARQALAFADRVAPSQCRLKIGKEMFTQAGPALVRDLQQRGFEVFLDLKFHDIPNTVAKAVSAAAELGVWMVNVHASGGERMMAAAREALVPFGADAPVLIAVTVLTSMNDEDLRGIGIAGSASDHAVRLAILAQACGLDGVVCSAWEAARLKTDCGAGFALVTPGIRPTGSDAGDQRRVMTPLQAQQVGVDYMVIGRPITQAADPAATLAAILQELQPGGADV</sequence>
<keyword id="KW-0210">Decarboxylase</keyword>
<keyword id="KW-0456">Lyase</keyword>
<keyword id="KW-0665">Pyrimidine biosynthesis</keyword>
<comment type="function">
    <text evidence="1">Catalyzes the decarboxylation of orotidine 5'-monophosphate (OMP) to uridine 5'-monophosphate (UMP).</text>
</comment>
<comment type="catalytic activity">
    <reaction evidence="1">
        <text>orotidine 5'-phosphate + H(+) = UMP + CO2</text>
        <dbReference type="Rhea" id="RHEA:11596"/>
        <dbReference type="ChEBI" id="CHEBI:15378"/>
        <dbReference type="ChEBI" id="CHEBI:16526"/>
        <dbReference type="ChEBI" id="CHEBI:57538"/>
        <dbReference type="ChEBI" id="CHEBI:57865"/>
        <dbReference type="EC" id="4.1.1.23"/>
    </reaction>
</comment>
<comment type="pathway">
    <text evidence="1">Pyrimidine metabolism; UMP biosynthesis via de novo pathway; UMP from orotate: step 2/2.</text>
</comment>
<comment type="subunit">
    <text evidence="1">Homodimer.</text>
</comment>
<comment type="similarity">
    <text evidence="1">Belongs to the OMP decarboxylase family. Type 1 subfamily.</text>
</comment>
<name>PYRF_SODGM</name>
<proteinExistence type="inferred from homology"/>
<evidence type="ECO:0000255" key="1">
    <source>
        <dbReference type="HAMAP-Rule" id="MF_01200"/>
    </source>
</evidence>
<accession>Q2NT36</accession>
<gene>
    <name evidence="1" type="primary">pyrF</name>
    <name type="ordered locus">SG1414</name>
</gene>